<evidence type="ECO:0000255" key="1">
    <source>
        <dbReference type="HAMAP-Rule" id="MF_00185"/>
    </source>
</evidence>
<proteinExistence type="inferred from homology"/>
<dbReference type="EC" id="2.5.1.75" evidence="1"/>
<dbReference type="EMBL" id="CP000407">
    <property type="protein sequence ID" value="ABP90282.1"/>
    <property type="molecule type" value="Genomic_DNA"/>
</dbReference>
<dbReference type="SMR" id="A4VVZ3"/>
<dbReference type="STRING" id="391295.SSU05_1316"/>
<dbReference type="KEGG" id="ssu:SSU05_1316"/>
<dbReference type="eggNOG" id="COG0324">
    <property type="taxonomic scope" value="Bacteria"/>
</dbReference>
<dbReference type="HOGENOM" id="CLU_032616_0_1_9"/>
<dbReference type="GO" id="GO:0005524">
    <property type="term" value="F:ATP binding"/>
    <property type="evidence" value="ECO:0007669"/>
    <property type="project" value="UniProtKB-UniRule"/>
</dbReference>
<dbReference type="GO" id="GO:0052381">
    <property type="term" value="F:tRNA dimethylallyltransferase activity"/>
    <property type="evidence" value="ECO:0007669"/>
    <property type="project" value="UniProtKB-UniRule"/>
</dbReference>
<dbReference type="GO" id="GO:0006400">
    <property type="term" value="P:tRNA modification"/>
    <property type="evidence" value="ECO:0007669"/>
    <property type="project" value="TreeGrafter"/>
</dbReference>
<dbReference type="Gene3D" id="3.40.50.300">
    <property type="entry name" value="P-loop containing nucleotide triphosphate hydrolases"/>
    <property type="match status" value="1"/>
</dbReference>
<dbReference type="HAMAP" id="MF_00185">
    <property type="entry name" value="IPP_trans"/>
    <property type="match status" value="1"/>
</dbReference>
<dbReference type="InterPro" id="IPR039657">
    <property type="entry name" value="Dimethylallyltransferase"/>
</dbReference>
<dbReference type="InterPro" id="IPR018022">
    <property type="entry name" value="IPT"/>
</dbReference>
<dbReference type="InterPro" id="IPR027417">
    <property type="entry name" value="P-loop_NTPase"/>
</dbReference>
<dbReference type="NCBIfam" id="TIGR00174">
    <property type="entry name" value="miaA"/>
    <property type="match status" value="1"/>
</dbReference>
<dbReference type="PANTHER" id="PTHR11088">
    <property type="entry name" value="TRNA DIMETHYLALLYLTRANSFERASE"/>
    <property type="match status" value="1"/>
</dbReference>
<dbReference type="PANTHER" id="PTHR11088:SF60">
    <property type="entry name" value="TRNA DIMETHYLALLYLTRANSFERASE"/>
    <property type="match status" value="1"/>
</dbReference>
<dbReference type="Pfam" id="PF01715">
    <property type="entry name" value="IPPT"/>
    <property type="match status" value="1"/>
</dbReference>
<dbReference type="SUPFAM" id="SSF52540">
    <property type="entry name" value="P-loop containing nucleoside triphosphate hydrolases"/>
    <property type="match status" value="2"/>
</dbReference>
<gene>
    <name evidence="1" type="primary">miaA</name>
    <name type="ordered locus">SSU05_1316</name>
</gene>
<keyword id="KW-0067">ATP-binding</keyword>
<keyword id="KW-0460">Magnesium</keyword>
<keyword id="KW-0547">Nucleotide-binding</keyword>
<keyword id="KW-0808">Transferase</keyword>
<keyword id="KW-0819">tRNA processing</keyword>
<protein>
    <recommendedName>
        <fullName evidence="1">tRNA dimethylallyltransferase</fullName>
        <ecNumber evidence="1">2.5.1.75</ecNumber>
    </recommendedName>
    <alternativeName>
        <fullName evidence="1">Dimethylallyl diphosphate:tRNA dimethylallyltransferase</fullName>
        <shortName evidence="1">DMAPP:tRNA dimethylallyltransferase</shortName>
        <shortName evidence="1">DMATase</shortName>
    </alternativeName>
    <alternativeName>
        <fullName evidence="1">Isopentenyl-diphosphate:tRNA isopentenyltransferase</fullName>
        <shortName evidence="1">IPP transferase</shortName>
        <shortName evidence="1">IPPT</shortName>
        <shortName evidence="1">IPTase</shortName>
    </alternativeName>
</protein>
<reference key="1">
    <citation type="journal article" date="2007" name="PLoS ONE">
        <title>A glimpse of streptococcal toxic shock syndrome from comparative genomics of S. suis 2 Chinese isolates.</title>
        <authorList>
            <person name="Chen C."/>
            <person name="Tang J."/>
            <person name="Dong W."/>
            <person name="Wang C."/>
            <person name="Feng Y."/>
            <person name="Wang J."/>
            <person name="Zheng F."/>
            <person name="Pan X."/>
            <person name="Liu D."/>
            <person name="Li M."/>
            <person name="Song Y."/>
            <person name="Zhu X."/>
            <person name="Sun H."/>
            <person name="Feng T."/>
            <person name="Guo Z."/>
            <person name="Ju A."/>
            <person name="Ge J."/>
            <person name="Dong Y."/>
            <person name="Sun W."/>
            <person name="Jiang Y."/>
            <person name="Wang J."/>
            <person name="Yan J."/>
            <person name="Yang H."/>
            <person name="Wang X."/>
            <person name="Gao G.F."/>
            <person name="Yang R."/>
            <person name="Wang J."/>
            <person name="Yu J."/>
        </authorList>
    </citation>
    <scope>NUCLEOTIDE SEQUENCE [LARGE SCALE GENOMIC DNA]</scope>
    <source>
        <strain>05ZYH33</strain>
    </source>
</reference>
<sequence length="294" mass="33117">MKTKVIVVIGPTAVGKTALGIDLAQRYNGEIISGDSQQVYRKLDIGTAKASPEEQAAAVHHLIDVRDVTEGYSAYEFVAEAKALIADIKSRGKLPIIVGGTGLYIQSLLEGYHLGGLVDQEQVLAYRAELDCLSDEDLETMAEQAGLMVEGNSRRRIIRGLELKKFGENLENTESGYEPLYICLTDDRQVLYDRINQRVDKMMAAGLLDEVSWLYQEHPEAQAAMGIGYKEFFPYLEGQISLEEAIDNVKQNSRRFAKRQLTWFRNRMAVDFYQVSEEAVKDRIYTAVEEFLDD</sequence>
<feature type="chain" id="PRO_1000020676" description="tRNA dimethylallyltransferase">
    <location>
        <begin position="1"/>
        <end position="294"/>
    </location>
</feature>
<feature type="region of interest" description="Interaction with substrate tRNA" evidence="1">
    <location>
        <begin position="35"/>
        <end position="38"/>
    </location>
</feature>
<feature type="binding site" evidence="1">
    <location>
        <begin position="10"/>
        <end position="17"/>
    </location>
    <ligand>
        <name>ATP</name>
        <dbReference type="ChEBI" id="CHEBI:30616"/>
    </ligand>
</feature>
<feature type="binding site" evidence="1">
    <location>
        <begin position="12"/>
        <end position="17"/>
    </location>
    <ligand>
        <name>substrate</name>
    </ligand>
</feature>
<feature type="site" description="Interaction with substrate tRNA" evidence="1">
    <location>
        <position position="101"/>
    </location>
</feature>
<feature type="site" description="Interaction with substrate tRNA" evidence="1">
    <location>
        <position position="127"/>
    </location>
</feature>
<accession>A4VVZ3</accession>
<comment type="function">
    <text evidence="1">Catalyzes the transfer of a dimethylallyl group onto the adenine at position 37 in tRNAs that read codons beginning with uridine, leading to the formation of N6-(dimethylallyl)adenosine (i(6)A).</text>
</comment>
<comment type="catalytic activity">
    <reaction evidence="1">
        <text>adenosine(37) in tRNA + dimethylallyl diphosphate = N(6)-dimethylallyladenosine(37) in tRNA + diphosphate</text>
        <dbReference type="Rhea" id="RHEA:26482"/>
        <dbReference type="Rhea" id="RHEA-COMP:10162"/>
        <dbReference type="Rhea" id="RHEA-COMP:10375"/>
        <dbReference type="ChEBI" id="CHEBI:33019"/>
        <dbReference type="ChEBI" id="CHEBI:57623"/>
        <dbReference type="ChEBI" id="CHEBI:74411"/>
        <dbReference type="ChEBI" id="CHEBI:74415"/>
        <dbReference type="EC" id="2.5.1.75"/>
    </reaction>
</comment>
<comment type="cofactor">
    <cofactor evidence="1">
        <name>Mg(2+)</name>
        <dbReference type="ChEBI" id="CHEBI:18420"/>
    </cofactor>
</comment>
<comment type="subunit">
    <text evidence="1">Monomer.</text>
</comment>
<comment type="similarity">
    <text evidence="1">Belongs to the IPP transferase family.</text>
</comment>
<name>MIAA_STRSY</name>
<organism>
    <name type="scientific">Streptococcus suis (strain 05ZYH33)</name>
    <dbReference type="NCBI Taxonomy" id="391295"/>
    <lineage>
        <taxon>Bacteria</taxon>
        <taxon>Bacillati</taxon>
        <taxon>Bacillota</taxon>
        <taxon>Bacilli</taxon>
        <taxon>Lactobacillales</taxon>
        <taxon>Streptococcaceae</taxon>
        <taxon>Streptococcus</taxon>
    </lineage>
</organism>